<gene>
    <name evidence="1" type="primary">rlmN</name>
    <name type="ordered locus">Exig_2974</name>
</gene>
<protein>
    <recommendedName>
        <fullName evidence="1">Probable dual-specificity RNA methyltransferase RlmN</fullName>
        <ecNumber evidence="1">2.1.1.192</ecNumber>
    </recommendedName>
    <alternativeName>
        <fullName evidence="1">23S rRNA (adenine(2503)-C(2))-methyltransferase</fullName>
    </alternativeName>
    <alternativeName>
        <fullName evidence="1">23S rRNA m2A2503 methyltransferase</fullName>
    </alternativeName>
    <alternativeName>
        <fullName evidence="1">Ribosomal RNA large subunit methyltransferase N</fullName>
    </alternativeName>
    <alternativeName>
        <fullName evidence="1">tRNA (adenine(37)-C(2))-methyltransferase</fullName>
    </alternativeName>
    <alternativeName>
        <fullName evidence="1">tRNA m2A37 methyltransferase</fullName>
    </alternativeName>
</protein>
<dbReference type="EC" id="2.1.1.192" evidence="1"/>
<dbReference type="EMBL" id="CP001022">
    <property type="protein sequence ID" value="ACB62420.1"/>
    <property type="molecule type" value="Genomic_DNA"/>
</dbReference>
<dbReference type="RefSeq" id="WP_012371835.1">
    <property type="nucleotide sequence ID" value="NC_010556.1"/>
</dbReference>
<dbReference type="SMR" id="B1YG36"/>
<dbReference type="STRING" id="262543.Exig_2974"/>
<dbReference type="KEGG" id="esi:Exig_2974"/>
<dbReference type="eggNOG" id="COG0820">
    <property type="taxonomic scope" value="Bacteria"/>
</dbReference>
<dbReference type="HOGENOM" id="CLU_029101_0_1_9"/>
<dbReference type="OrthoDB" id="9793973at2"/>
<dbReference type="Proteomes" id="UP000001681">
    <property type="component" value="Chromosome"/>
</dbReference>
<dbReference type="GO" id="GO:0005737">
    <property type="term" value="C:cytoplasm"/>
    <property type="evidence" value="ECO:0007669"/>
    <property type="project" value="UniProtKB-SubCell"/>
</dbReference>
<dbReference type="GO" id="GO:0051539">
    <property type="term" value="F:4 iron, 4 sulfur cluster binding"/>
    <property type="evidence" value="ECO:0007669"/>
    <property type="project" value="UniProtKB-UniRule"/>
</dbReference>
<dbReference type="GO" id="GO:0046872">
    <property type="term" value="F:metal ion binding"/>
    <property type="evidence" value="ECO:0007669"/>
    <property type="project" value="UniProtKB-KW"/>
</dbReference>
<dbReference type="GO" id="GO:0070040">
    <property type="term" value="F:rRNA (adenine(2503)-C2-)-methyltransferase activity"/>
    <property type="evidence" value="ECO:0007669"/>
    <property type="project" value="UniProtKB-UniRule"/>
</dbReference>
<dbReference type="GO" id="GO:0019843">
    <property type="term" value="F:rRNA binding"/>
    <property type="evidence" value="ECO:0007669"/>
    <property type="project" value="UniProtKB-UniRule"/>
</dbReference>
<dbReference type="GO" id="GO:0002935">
    <property type="term" value="F:tRNA (adenine(37)-C2)-methyltransferase activity"/>
    <property type="evidence" value="ECO:0007669"/>
    <property type="project" value="UniProtKB-UniRule"/>
</dbReference>
<dbReference type="GO" id="GO:0000049">
    <property type="term" value="F:tRNA binding"/>
    <property type="evidence" value="ECO:0007669"/>
    <property type="project" value="UniProtKB-UniRule"/>
</dbReference>
<dbReference type="GO" id="GO:0070475">
    <property type="term" value="P:rRNA base methylation"/>
    <property type="evidence" value="ECO:0007669"/>
    <property type="project" value="UniProtKB-UniRule"/>
</dbReference>
<dbReference type="GO" id="GO:0030488">
    <property type="term" value="P:tRNA methylation"/>
    <property type="evidence" value="ECO:0007669"/>
    <property type="project" value="UniProtKB-UniRule"/>
</dbReference>
<dbReference type="CDD" id="cd01335">
    <property type="entry name" value="Radical_SAM"/>
    <property type="match status" value="1"/>
</dbReference>
<dbReference type="FunFam" id="3.20.20.70:FF:000014">
    <property type="entry name" value="Probable dual-specificity RNA methyltransferase RlmN"/>
    <property type="match status" value="1"/>
</dbReference>
<dbReference type="Gene3D" id="1.10.150.530">
    <property type="match status" value="1"/>
</dbReference>
<dbReference type="Gene3D" id="3.20.20.70">
    <property type="entry name" value="Aldolase class I"/>
    <property type="match status" value="1"/>
</dbReference>
<dbReference type="HAMAP" id="MF_01849">
    <property type="entry name" value="RNA_methyltr_RlmN"/>
    <property type="match status" value="1"/>
</dbReference>
<dbReference type="InterPro" id="IPR013785">
    <property type="entry name" value="Aldolase_TIM"/>
</dbReference>
<dbReference type="InterPro" id="IPR040072">
    <property type="entry name" value="Methyltransferase_A"/>
</dbReference>
<dbReference type="InterPro" id="IPR048641">
    <property type="entry name" value="RlmN_N"/>
</dbReference>
<dbReference type="InterPro" id="IPR027492">
    <property type="entry name" value="RNA_MTrfase_RlmN"/>
</dbReference>
<dbReference type="InterPro" id="IPR004383">
    <property type="entry name" value="rRNA_lsu_MTrfase_RlmN/Cfr"/>
</dbReference>
<dbReference type="InterPro" id="IPR007197">
    <property type="entry name" value="rSAM"/>
</dbReference>
<dbReference type="NCBIfam" id="TIGR00048">
    <property type="entry name" value="rRNA_mod_RlmN"/>
    <property type="match status" value="1"/>
</dbReference>
<dbReference type="PANTHER" id="PTHR30544">
    <property type="entry name" value="23S RRNA METHYLTRANSFERASE"/>
    <property type="match status" value="1"/>
</dbReference>
<dbReference type="PANTHER" id="PTHR30544:SF5">
    <property type="entry name" value="RADICAL SAM CORE DOMAIN-CONTAINING PROTEIN"/>
    <property type="match status" value="1"/>
</dbReference>
<dbReference type="Pfam" id="PF04055">
    <property type="entry name" value="Radical_SAM"/>
    <property type="match status" value="1"/>
</dbReference>
<dbReference type="Pfam" id="PF21016">
    <property type="entry name" value="RlmN_N"/>
    <property type="match status" value="1"/>
</dbReference>
<dbReference type="PIRSF" id="PIRSF006004">
    <property type="entry name" value="CHP00048"/>
    <property type="match status" value="1"/>
</dbReference>
<dbReference type="SFLD" id="SFLDF00275">
    <property type="entry name" value="adenosine_C2_methyltransferase"/>
    <property type="match status" value="1"/>
</dbReference>
<dbReference type="SFLD" id="SFLDS00029">
    <property type="entry name" value="Radical_SAM"/>
    <property type="match status" value="1"/>
</dbReference>
<dbReference type="SUPFAM" id="SSF102114">
    <property type="entry name" value="Radical SAM enzymes"/>
    <property type="match status" value="1"/>
</dbReference>
<dbReference type="PROSITE" id="PS51918">
    <property type="entry name" value="RADICAL_SAM"/>
    <property type="match status" value="1"/>
</dbReference>
<reference key="1">
    <citation type="submission" date="2008-04" db="EMBL/GenBank/DDBJ databases">
        <title>Complete sequence of chromosome of Exiguobacterium sibiricum 255-15.</title>
        <authorList>
            <consortium name="US DOE Joint Genome Institute"/>
            <person name="Copeland A."/>
            <person name="Lucas S."/>
            <person name="Lapidus A."/>
            <person name="Glavina del Rio T."/>
            <person name="Dalin E."/>
            <person name="Tice H."/>
            <person name="Bruce D."/>
            <person name="Goodwin L."/>
            <person name="Pitluck S."/>
            <person name="Kiss H."/>
            <person name="Chertkov O."/>
            <person name="Monk C."/>
            <person name="Brettin T."/>
            <person name="Detter J.C."/>
            <person name="Han C."/>
            <person name="Kuske C.R."/>
            <person name="Schmutz J."/>
            <person name="Larimer F."/>
            <person name="Land M."/>
            <person name="Hauser L."/>
            <person name="Kyrpides N."/>
            <person name="Mikhailova N."/>
            <person name="Vishnivetskaya T."/>
            <person name="Rodrigues D.F."/>
            <person name="Gilichinsky D."/>
            <person name="Tiedje J."/>
            <person name="Richardson P."/>
        </authorList>
    </citation>
    <scope>NUCLEOTIDE SEQUENCE [LARGE SCALE GENOMIC DNA]</scope>
    <source>
        <strain>DSM 17290 / CCUG 55495 / CIP 109462 / JCM 13490 / 255-15</strain>
    </source>
</reference>
<accession>B1YG36</accession>
<name>RLMN_EXIS2</name>
<proteinExistence type="inferred from homology"/>
<evidence type="ECO:0000255" key="1">
    <source>
        <dbReference type="HAMAP-Rule" id="MF_01849"/>
    </source>
</evidence>
<evidence type="ECO:0000255" key="2">
    <source>
        <dbReference type="PROSITE-ProRule" id="PRU01266"/>
    </source>
</evidence>
<feature type="chain" id="PRO_0000350174" description="Probable dual-specificity RNA methyltransferase RlmN">
    <location>
        <begin position="1"/>
        <end position="357"/>
    </location>
</feature>
<feature type="domain" description="Radical SAM core" evidence="2">
    <location>
        <begin position="98"/>
        <end position="336"/>
    </location>
</feature>
<feature type="active site" description="Proton acceptor" evidence="1">
    <location>
        <position position="92"/>
    </location>
</feature>
<feature type="active site" description="S-methylcysteine intermediate" evidence="1">
    <location>
        <position position="341"/>
    </location>
</feature>
<feature type="binding site" evidence="1">
    <location>
        <position position="112"/>
    </location>
    <ligand>
        <name>[4Fe-4S] cluster</name>
        <dbReference type="ChEBI" id="CHEBI:49883"/>
        <note>4Fe-4S-S-AdoMet</note>
    </ligand>
</feature>
<feature type="binding site" evidence="1">
    <location>
        <position position="116"/>
    </location>
    <ligand>
        <name>[4Fe-4S] cluster</name>
        <dbReference type="ChEBI" id="CHEBI:49883"/>
        <note>4Fe-4S-S-AdoMet</note>
    </ligand>
</feature>
<feature type="binding site" evidence="1">
    <location>
        <position position="119"/>
    </location>
    <ligand>
        <name>[4Fe-4S] cluster</name>
        <dbReference type="ChEBI" id="CHEBI:49883"/>
        <note>4Fe-4S-S-AdoMet</note>
    </ligand>
</feature>
<feature type="binding site" evidence="1">
    <location>
        <begin position="164"/>
        <end position="165"/>
    </location>
    <ligand>
        <name>S-adenosyl-L-methionine</name>
        <dbReference type="ChEBI" id="CHEBI:59789"/>
    </ligand>
</feature>
<feature type="binding site" evidence="1">
    <location>
        <position position="196"/>
    </location>
    <ligand>
        <name>S-adenosyl-L-methionine</name>
        <dbReference type="ChEBI" id="CHEBI:59789"/>
    </ligand>
</feature>
<feature type="binding site" evidence="1">
    <location>
        <begin position="219"/>
        <end position="221"/>
    </location>
    <ligand>
        <name>S-adenosyl-L-methionine</name>
        <dbReference type="ChEBI" id="CHEBI:59789"/>
    </ligand>
</feature>
<feature type="binding site" evidence="1">
    <location>
        <position position="297"/>
    </location>
    <ligand>
        <name>S-adenosyl-L-methionine</name>
        <dbReference type="ChEBI" id="CHEBI:59789"/>
    </ligand>
</feature>
<feature type="disulfide bond" description="(transient)" evidence="1">
    <location>
        <begin position="105"/>
        <end position="341"/>
    </location>
</feature>
<comment type="function">
    <text evidence="1">Specifically methylates position 2 of adenine 2503 in 23S rRNA and position 2 of adenine 37 in tRNAs.</text>
</comment>
<comment type="catalytic activity">
    <reaction evidence="1">
        <text>adenosine(2503) in 23S rRNA + 2 reduced [2Fe-2S]-[ferredoxin] + 2 S-adenosyl-L-methionine = 2-methyladenosine(2503) in 23S rRNA + 5'-deoxyadenosine + L-methionine + 2 oxidized [2Fe-2S]-[ferredoxin] + S-adenosyl-L-homocysteine</text>
        <dbReference type="Rhea" id="RHEA:42916"/>
        <dbReference type="Rhea" id="RHEA-COMP:10000"/>
        <dbReference type="Rhea" id="RHEA-COMP:10001"/>
        <dbReference type="Rhea" id="RHEA-COMP:10152"/>
        <dbReference type="Rhea" id="RHEA-COMP:10282"/>
        <dbReference type="ChEBI" id="CHEBI:17319"/>
        <dbReference type="ChEBI" id="CHEBI:33737"/>
        <dbReference type="ChEBI" id="CHEBI:33738"/>
        <dbReference type="ChEBI" id="CHEBI:57844"/>
        <dbReference type="ChEBI" id="CHEBI:57856"/>
        <dbReference type="ChEBI" id="CHEBI:59789"/>
        <dbReference type="ChEBI" id="CHEBI:74411"/>
        <dbReference type="ChEBI" id="CHEBI:74497"/>
        <dbReference type="EC" id="2.1.1.192"/>
    </reaction>
</comment>
<comment type="catalytic activity">
    <reaction evidence="1">
        <text>adenosine(37) in tRNA + 2 reduced [2Fe-2S]-[ferredoxin] + 2 S-adenosyl-L-methionine = 2-methyladenosine(37) in tRNA + 5'-deoxyadenosine + L-methionine + 2 oxidized [2Fe-2S]-[ferredoxin] + S-adenosyl-L-homocysteine</text>
        <dbReference type="Rhea" id="RHEA:43332"/>
        <dbReference type="Rhea" id="RHEA-COMP:10000"/>
        <dbReference type="Rhea" id="RHEA-COMP:10001"/>
        <dbReference type="Rhea" id="RHEA-COMP:10162"/>
        <dbReference type="Rhea" id="RHEA-COMP:10485"/>
        <dbReference type="ChEBI" id="CHEBI:17319"/>
        <dbReference type="ChEBI" id="CHEBI:33737"/>
        <dbReference type="ChEBI" id="CHEBI:33738"/>
        <dbReference type="ChEBI" id="CHEBI:57844"/>
        <dbReference type="ChEBI" id="CHEBI:57856"/>
        <dbReference type="ChEBI" id="CHEBI:59789"/>
        <dbReference type="ChEBI" id="CHEBI:74411"/>
        <dbReference type="ChEBI" id="CHEBI:74497"/>
        <dbReference type="EC" id="2.1.1.192"/>
    </reaction>
</comment>
<comment type="cofactor">
    <cofactor evidence="1">
        <name>[4Fe-4S] cluster</name>
        <dbReference type="ChEBI" id="CHEBI:49883"/>
    </cofactor>
    <text evidence="1">Binds 1 [4Fe-4S] cluster. The cluster is coordinated with 3 cysteines and an exchangeable S-adenosyl-L-methionine.</text>
</comment>
<comment type="subcellular location">
    <subcellularLocation>
        <location evidence="1">Cytoplasm</location>
    </subcellularLocation>
</comment>
<comment type="miscellaneous">
    <text evidence="1">Reaction proceeds by a ping-pong mechanism involving intermediate methylation of a conserved cysteine residue.</text>
</comment>
<comment type="similarity">
    <text evidence="1">Belongs to the radical SAM superfamily. RlmN family.</text>
</comment>
<keyword id="KW-0004">4Fe-4S</keyword>
<keyword id="KW-0963">Cytoplasm</keyword>
<keyword id="KW-1015">Disulfide bond</keyword>
<keyword id="KW-0408">Iron</keyword>
<keyword id="KW-0411">Iron-sulfur</keyword>
<keyword id="KW-0479">Metal-binding</keyword>
<keyword id="KW-0489">Methyltransferase</keyword>
<keyword id="KW-1185">Reference proteome</keyword>
<keyword id="KW-0698">rRNA processing</keyword>
<keyword id="KW-0949">S-adenosyl-L-methionine</keyword>
<keyword id="KW-0808">Transferase</keyword>
<keyword id="KW-0819">tRNA processing</keyword>
<organism>
    <name type="scientific">Exiguobacterium sibiricum (strain DSM 17290 / CCUG 55495 / CIP 109462 / JCM 13490 / 255-15)</name>
    <dbReference type="NCBI Taxonomy" id="262543"/>
    <lineage>
        <taxon>Bacteria</taxon>
        <taxon>Bacillati</taxon>
        <taxon>Bacillota</taxon>
        <taxon>Bacilli</taxon>
        <taxon>Bacillales</taxon>
        <taxon>Bacillales Family XII. Incertae Sedis</taxon>
        <taxon>Exiguobacterium</taxon>
    </lineage>
</organism>
<sequence>MNKPSIYGLTLEQMTEWLSHQGHKPFRAKQVWDWLYRKRVTTFAEMTNVNKDCLELLDQSFAIDSMTQAVKQESADGTIKFLFKLYDGSLIETVLMRHKYGLSVCVTTQVGCNIGCSFCASGLIKKSRDLSAGEIVEQIMNVQHHLDAVGKEERVSHVVVMGIGEPFDNFDNMVDFLNVIKDHNGLAIGARHITVSTSGLADKIYKFADLKLQVNLAISLHAPNNELRTQIMKINRAIPLEKLMPAIDYYVKTTNRKITIEYILLRGVNDQKAQAIELAKLFEDKRHLTYVNLIPYNPVDEHGQYQRSTSEDISTFYDTLKKNGLNCGVRLEHGTDIDAACGQLRSKQIKKDTVAAK</sequence>